<keyword id="KW-0004">4Fe-4S</keyword>
<keyword id="KW-0963">Cytoplasm</keyword>
<keyword id="KW-0408">Iron</keyword>
<keyword id="KW-0411">Iron-sulfur</keyword>
<keyword id="KW-0479">Metal-binding</keyword>
<keyword id="KW-0662">Pyridine nucleotide biosynthesis</keyword>
<keyword id="KW-1185">Reference proteome</keyword>
<keyword id="KW-0808">Transferase</keyword>
<evidence type="ECO:0000255" key="1">
    <source>
        <dbReference type="HAMAP-Rule" id="MF_00567"/>
    </source>
</evidence>
<name>NADA_VIBCH</name>
<comment type="function">
    <text evidence="1">Catalyzes the condensation of iminoaspartate with dihydroxyacetone phosphate to form quinolinate.</text>
</comment>
<comment type="catalytic activity">
    <reaction evidence="1">
        <text>iminosuccinate + dihydroxyacetone phosphate = quinolinate + phosphate + 2 H2O + H(+)</text>
        <dbReference type="Rhea" id="RHEA:25888"/>
        <dbReference type="ChEBI" id="CHEBI:15377"/>
        <dbReference type="ChEBI" id="CHEBI:15378"/>
        <dbReference type="ChEBI" id="CHEBI:29959"/>
        <dbReference type="ChEBI" id="CHEBI:43474"/>
        <dbReference type="ChEBI" id="CHEBI:57642"/>
        <dbReference type="ChEBI" id="CHEBI:77875"/>
        <dbReference type="EC" id="2.5.1.72"/>
    </reaction>
    <physiologicalReaction direction="left-to-right" evidence="1">
        <dbReference type="Rhea" id="RHEA:25889"/>
    </physiologicalReaction>
</comment>
<comment type="cofactor">
    <cofactor evidence="1">
        <name>[4Fe-4S] cluster</name>
        <dbReference type="ChEBI" id="CHEBI:49883"/>
    </cofactor>
    <text evidence="1">Binds 1 [4Fe-4S] cluster per subunit.</text>
</comment>
<comment type="pathway">
    <text evidence="1">Cofactor biosynthesis; NAD(+) biosynthesis; quinolinate from iminoaspartate: step 1/1.</text>
</comment>
<comment type="subcellular location">
    <subcellularLocation>
        <location evidence="1">Cytoplasm</location>
    </subcellularLocation>
</comment>
<comment type="similarity">
    <text evidence="1">Belongs to the quinolinate synthase family. Type 1 subfamily.</text>
</comment>
<sequence>MSHILDTINTVYPFPPKPIPLRDEEKQAYIAEIKQLLIEKDAVLIAHYYTDPEIQALAESTGGFVGDSLEMAKFGNRYPATTLIIAGVRFMGESAKILTPEKRILMPTLEAECSLDLGCPADKFTEFCDAHPDHTVVVYANTSAAVKARADWVVTSSIALEIVEHLDSEGKPIIWGPDRHLGAYIAKKTGADMLLWQGECVVHDEFSADALRKMKALYPDAAILVHPESPASVVELADAVGSTSQLIKAAKTLPQQKMIVATDKGIFFKMQQMVPEKELIEAPTAGAGATCRSCAHCPWMAMNGLQAIAQALREGGKQHEIFVDEALRVKSLIPLNRMLDFAEQLNLKVKGNA</sequence>
<reference key="1">
    <citation type="journal article" date="2000" name="Nature">
        <title>DNA sequence of both chromosomes of the cholera pathogen Vibrio cholerae.</title>
        <authorList>
            <person name="Heidelberg J.F."/>
            <person name="Eisen J.A."/>
            <person name="Nelson W.C."/>
            <person name="Clayton R.A."/>
            <person name="Gwinn M.L."/>
            <person name="Dodson R.J."/>
            <person name="Haft D.H."/>
            <person name="Hickey E.K."/>
            <person name="Peterson J.D."/>
            <person name="Umayam L.A."/>
            <person name="Gill S.R."/>
            <person name="Nelson K.E."/>
            <person name="Read T.D."/>
            <person name="Tettelin H."/>
            <person name="Richardson D.L."/>
            <person name="Ermolaeva M.D."/>
            <person name="Vamathevan J.J."/>
            <person name="Bass S."/>
            <person name="Qin H."/>
            <person name="Dragoi I."/>
            <person name="Sellers P."/>
            <person name="McDonald L.A."/>
            <person name="Utterback T.R."/>
            <person name="Fleischmann R.D."/>
            <person name="Nierman W.C."/>
            <person name="White O."/>
            <person name="Salzberg S.L."/>
            <person name="Smith H.O."/>
            <person name="Colwell R.R."/>
            <person name="Mekalanos J.J."/>
            <person name="Venter J.C."/>
            <person name="Fraser C.M."/>
        </authorList>
    </citation>
    <scope>NUCLEOTIDE SEQUENCE [LARGE SCALE GENOMIC DNA]</scope>
    <source>
        <strain>ATCC 39315 / El Tor Inaba N16961</strain>
    </source>
</reference>
<dbReference type="EC" id="2.5.1.72" evidence="1"/>
<dbReference type="EMBL" id="AE003852">
    <property type="protein sequence ID" value="AAF94981.1"/>
    <property type="molecule type" value="Genomic_DNA"/>
</dbReference>
<dbReference type="PIR" id="E82151">
    <property type="entry name" value="E82151"/>
</dbReference>
<dbReference type="RefSeq" id="NP_231467.1">
    <property type="nucleotide sequence ID" value="NC_002505.1"/>
</dbReference>
<dbReference type="RefSeq" id="WP_000018291.1">
    <property type="nucleotide sequence ID" value="NZ_LT906614.1"/>
</dbReference>
<dbReference type="SMR" id="Q9KR14"/>
<dbReference type="STRING" id="243277.VC_1833"/>
<dbReference type="DNASU" id="2613587"/>
<dbReference type="EnsemblBacteria" id="AAF94981">
    <property type="protein sequence ID" value="AAF94981"/>
    <property type="gene ID" value="VC_1833"/>
</dbReference>
<dbReference type="KEGG" id="vch:VC_1833"/>
<dbReference type="PATRIC" id="fig|243277.26.peg.1749"/>
<dbReference type="eggNOG" id="COG0379">
    <property type="taxonomic scope" value="Bacteria"/>
</dbReference>
<dbReference type="HOGENOM" id="CLU_047382_1_0_6"/>
<dbReference type="UniPathway" id="UPA00253">
    <property type="reaction ID" value="UER00327"/>
</dbReference>
<dbReference type="Proteomes" id="UP000000584">
    <property type="component" value="Chromosome 1"/>
</dbReference>
<dbReference type="GO" id="GO:0005829">
    <property type="term" value="C:cytosol"/>
    <property type="evidence" value="ECO:0000318"/>
    <property type="project" value="GO_Central"/>
</dbReference>
<dbReference type="GO" id="GO:0051539">
    <property type="term" value="F:4 iron, 4 sulfur cluster binding"/>
    <property type="evidence" value="ECO:0000318"/>
    <property type="project" value="GO_Central"/>
</dbReference>
<dbReference type="GO" id="GO:0046872">
    <property type="term" value="F:metal ion binding"/>
    <property type="evidence" value="ECO:0007669"/>
    <property type="project" value="UniProtKB-KW"/>
</dbReference>
<dbReference type="GO" id="GO:0008987">
    <property type="term" value="F:quinolinate synthetase A activity"/>
    <property type="evidence" value="ECO:0000318"/>
    <property type="project" value="GO_Central"/>
</dbReference>
<dbReference type="GO" id="GO:0034628">
    <property type="term" value="P:'de novo' NAD biosynthetic process from L-aspartate"/>
    <property type="evidence" value="ECO:0000318"/>
    <property type="project" value="GO_Central"/>
</dbReference>
<dbReference type="FunFam" id="3.40.50.10800:FF:000001">
    <property type="entry name" value="Quinolinate synthase A"/>
    <property type="match status" value="1"/>
</dbReference>
<dbReference type="FunFam" id="3.40.50.10800:FF:000003">
    <property type="entry name" value="Quinolinate synthase A"/>
    <property type="match status" value="1"/>
</dbReference>
<dbReference type="Gene3D" id="3.40.50.10800">
    <property type="entry name" value="NadA-like"/>
    <property type="match status" value="3"/>
</dbReference>
<dbReference type="HAMAP" id="MF_00567">
    <property type="entry name" value="NadA_type1"/>
    <property type="match status" value="1"/>
</dbReference>
<dbReference type="InterPro" id="IPR003473">
    <property type="entry name" value="NadA"/>
</dbReference>
<dbReference type="InterPro" id="IPR036094">
    <property type="entry name" value="NadA_sf"/>
</dbReference>
<dbReference type="InterPro" id="IPR023513">
    <property type="entry name" value="Quinolinate_synth_A_type1"/>
</dbReference>
<dbReference type="NCBIfam" id="TIGR00550">
    <property type="entry name" value="nadA"/>
    <property type="match status" value="1"/>
</dbReference>
<dbReference type="NCBIfam" id="NF006877">
    <property type="entry name" value="PRK09375.1-1"/>
    <property type="match status" value="1"/>
</dbReference>
<dbReference type="NCBIfam" id="NF006878">
    <property type="entry name" value="PRK09375.1-2"/>
    <property type="match status" value="1"/>
</dbReference>
<dbReference type="PANTHER" id="PTHR30573:SF0">
    <property type="entry name" value="QUINOLINATE SYNTHASE, CHLOROPLASTIC"/>
    <property type="match status" value="1"/>
</dbReference>
<dbReference type="PANTHER" id="PTHR30573">
    <property type="entry name" value="QUINOLINATE SYNTHETASE A"/>
    <property type="match status" value="1"/>
</dbReference>
<dbReference type="Pfam" id="PF02445">
    <property type="entry name" value="NadA"/>
    <property type="match status" value="1"/>
</dbReference>
<dbReference type="SUPFAM" id="SSF142754">
    <property type="entry name" value="NadA-like"/>
    <property type="match status" value="1"/>
</dbReference>
<accession>Q9KR14</accession>
<protein>
    <recommendedName>
        <fullName evidence="1">Quinolinate synthase</fullName>
        <ecNumber evidence="1">2.5.1.72</ecNumber>
    </recommendedName>
</protein>
<gene>
    <name evidence="1" type="primary">nadA</name>
    <name type="ordered locus">VC_1833</name>
</gene>
<proteinExistence type="inferred from homology"/>
<organism>
    <name type="scientific">Vibrio cholerae serotype O1 (strain ATCC 39315 / El Tor Inaba N16961)</name>
    <dbReference type="NCBI Taxonomy" id="243277"/>
    <lineage>
        <taxon>Bacteria</taxon>
        <taxon>Pseudomonadati</taxon>
        <taxon>Pseudomonadota</taxon>
        <taxon>Gammaproteobacteria</taxon>
        <taxon>Vibrionales</taxon>
        <taxon>Vibrionaceae</taxon>
        <taxon>Vibrio</taxon>
    </lineage>
</organism>
<feature type="chain" id="PRO_0000155773" description="Quinolinate synthase">
    <location>
        <begin position="1"/>
        <end position="353"/>
    </location>
</feature>
<feature type="binding site" evidence="1">
    <location>
        <position position="47"/>
    </location>
    <ligand>
        <name>iminosuccinate</name>
        <dbReference type="ChEBI" id="CHEBI:77875"/>
    </ligand>
</feature>
<feature type="binding site" evidence="1">
    <location>
        <position position="68"/>
    </location>
    <ligand>
        <name>iminosuccinate</name>
        <dbReference type="ChEBI" id="CHEBI:77875"/>
    </ligand>
</feature>
<feature type="binding site" evidence="1">
    <location>
        <position position="113"/>
    </location>
    <ligand>
        <name>[4Fe-4S] cluster</name>
        <dbReference type="ChEBI" id="CHEBI:49883"/>
    </ligand>
</feature>
<feature type="binding site" evidence="1">
    <location>
        <begin position="139"/>
        <end position="141"/>
    </location>
    <ligand>
        <name>iminosuccinate</name>
        <dbReference type="ChEBI" id="CHEBI:77875"/>
    </ligand>
</feature>
<feature type="binding site" evidence="1">
    <location>
        <position position="156"/>
    </location>
    <ligand>
        <name>iminosuccinate</name>
        <dbReference type="ChEBI" id="CHEBI:77875"/>
    </ligand>
</feature>
<feature type="binding site" evidence="1">
    <location>
        <position position="200"/>
    </location>
    <ligand>
        <name>[4Fe-4S] cluster</name>
        <dbReference type="ChEBI" id="CHEBI:49883"/>
    </ligand>
</feature>
<feature type="binding site" evidence="1">
    <location>
        <begin position="226"/>
        <end position="228"/>
    </location>
    <ligand>
        <name>iminosuccinate</name>
        <dbReference type="ChEBI" id="CHEBI:77875"/>
    </ligand>
</feature>
<feature type="binding site" evidence="1">
    <location>
        <position position="243"/>
    </location>
    <ligand>
        <name>iminosuccinate</name>
        <dbReference type="ChEBI" id="CHEBI:77875"/>
    </ligand>
</feature>
<feature type="binding site" evidence="1">
    <location>
        <position position="297"/>
    </location>
    <ligand>
        <name>[4Fe-4S] cluster</name>
        <dbReference type="ChEBI" id="CHEBI:49883"/>
    </ligand>
</feature>